<name>FBXL5_SALSA</name>
<protein>
    <recommendedName>
        <fullName>F-box/LRR-repeat protein 5</fullName>
    </recommendedName>
    <alternativeName>
        <fullName>F-box and leucine-rich repeat protein 5</fullName>
    </alternativeName>
</protein>
<keyword id="KW-0963">Cytoplasm</keyword>
<keyword id="KW-0408">Iron</keyword>
<keyword id="KW-0411">Iron-sulfur</keyword>
<keyword id="KW-0433">Leucine-rich repeat</keyword>
<keyword id="KW-0479">Metal-binding</keyword>
<keyword id="KW-0539">Nucleus</keyword>
<keyword id="KW-1185">Reference proteome</keyword>
<keyword id="KW-0677">Repeat</keyword>
<keyword id="KW-0832">Ubl conjugation</keyword>
<keyword id="KW-0833">Ubl conjugation pathway</keyword>
<comment type="function">
    <text evidence="1">Component of some SCF (SKP1-cullin-F-box) protein ligase complex that plays a central role in iron homeostasis by promoting the ubiquitination and subsequent degradation of ireb2/irp2. Upon high iron and oxygen level, it specifically recognizes and binds ireb2/irp2, promoting its ubiquitination and degradation by the proteasome (By similarity).</text>
</comment>
<comment type="cofactor">
    <cofactor evidence="1">
        <name>[2Fe-2S] cluster</name>
        <dbReference type="ChEBI" id="CHEBI:190135"/>
    </cofactor>
</comment>
<comment type="pathway">
    <text>Protein modification; protein ubiquitination.</text>
</comment>
<comment type="subunit">
    <text evidence="1">Part of a SCF (SKP1-cullin-F-box) protein ligase complex.</text>
</comment>
<comment type="subcellular location">
    <subcellularLocation>
        <location evidence="1">Cytoplasm</location>
        <location evidence="1">Perinuclear region</location>
    </subcellularLocation>
    <subcellularLocation>
        <location evidence="1">Nucleus</location>
    </subcellularLocation>
</comment>
<comment type="domain">
    <text evidence="1">The hemerythrin-like region acts as an oxygen and iron sensor by binding oxygen through a diiron metal-center. In absence of oxygen and iron, the protein is ubiquitinated and degraded (By similarity).</text>
</comment>
<comment type="PTM">
    <text evidence="1">Ubiquitinated upon iron and oxygen depletion, leading to its degradation by the proteasome. Ubiquitination is regulated by the hemerythrin-like region that acts as an oxygen and iron sensor (By similarity).</text>
</comment>
<reference key="1">
    <citation type="journal article" date="2010" name="BMC Genomics">
        <title>Salmo salar and Esox lucius full-length cDNA sequences reveal changes in evolutionary pressures on a post-tetraploidization genome.</title>
        <authorList>
            <person name="Leong J.S."/>
            <person name="Jantzen S.G."/>
            <person name="von Schalburg K.R."/>
            <person name="Cooper G.A."/>
            <person name="Messmer A.M."/>
            <person name="Liao N.Y."/>
            <person name="Munro S."/>
            <person name="Moore R."/>
            <person name="Holt R.A."/>
            <person name="Jones S.J."/>
            <person name="Davidson W.S."/>
            <person name="Koop B.F."/>
        </authorList>
    </citation>
    <scope>NUCLEOTIDE SEQUENCE [LARGE SCALE MRNA]</scope>
    <source>
        <tissue>Brain</tissue>
    </source>
</reference>
<dbReference type="EMBL" id="BT059276">
    <property type="protein sequence ID" value="ACN10989.1"/>
    <property type="molecule type" value="mRNA"/>
</dbReference>
<dbReference type="RefSeq" id="XP_013978382.1">
    <property type="nucleotide sequence ID" value="XM_014122907.1"/>
</dbReference>
<dbReference type="SMR" id="C0HAC0"/>
<dbReference type="STRING" id="8030.ENSSSAP00000082709"/>
<dbReference type="PaxDb" id="8030-ENSSSAP00000082709"/>
<dbReference type="Ensembl" id="ENSSSAT00020157096">
    <property type="protein sequence ID" value="ENSSSAP00020120712"/>
    <property type="gene ID" value="ENSSSAG00020067438"/>
</dbReference>
<dbReference type="Ensembl" id="ENSSSAT00070040855">
    <property type="protein sequence ID" value="ENSSSAP00070039056"/>
    <property type="gene ID" value="ENSSSAG00070025555"/>
</dbReference>
<dbReference type="GeneID" id="106560246"/>
<dbReference type="KEGG" id="sasa:106560246"/>
<dbReference type="UniPathway" id="UPA00143"/>
<dbReference type="Proteomes" id="UP000087266">
    <property type="component" value="Chromosome ssa10"/>
</dbReference>
<dbReference type="Bgee" id="ENSSSAG00000067925">
    <property type="expression patterns" value="Expressed in ovary and 25 other cell types or tissues"/>
</dbReference>
<dbReference type="GO" id="GO:0005634">
    <property type="term" value="C:nucleus"/>
    <property type="evidence" value="ECO:0007669"/>
    <property type="project" value="UniProtKB-SubCell"/>
</dbReference>
<dbReference type="GO" id="GO:0048471">
    <property type="term" value="C:perinuclear region of cytoplasm"/>
    <property type="evidence" value="ECO:0000250"/>
    <property type="project" value="UniProtKB"/>
</dbReference>
<dbReference type="GO" id="GO:0019005">
    <property type="term" value="C:SCF ubiquitin ligase complex"/>
    <property type="evidence" value="ECO:0000250"/>
    <property type="project" value="UniProtKB"/>
</dbReference>
<dbReference type="GO" id="GO:0005506">
    <property type="term" value="F:iron ion binding"/>
    <property type="evidence" value="ECO:0000250"/>
    <property type="project" value="UniProtKB"/>
</dbReference>
<dbReference type="GO" id="GO:0051536">
    <property type="term" value="F:iron-sulfur cluster binding"/>
    <property type="evidence" value="ECO:0007669"/>
    <property type="project" value="UniProtKB-KW"/>
</dbReference>
<dbReference type="GO" id="GO:0006879">
    <property type="term" value="P:intracellular iron ion homeostasis"/>
    <property type="evidence" value="ECO:0000250"/>
    <property type="project" value="UniProtKB"/>
</dbReference>
<dbReference type="GO" id="GO:0016567">
    <property type="term" value="P:protein ubiquitination"/>
    <property type="evidence" value="ECO:0000250"/>
    <property type="project" value="UniProtKB"/>
</dbReference>
<dbReference type="GO" id="GO:0031146">
    <property type="term" value="P:SCF-dependent proteasomal ubiquitin-dependent protein catabolic process"/>
    <property type="evidence" value="ECO:0000250"/>
    <property type="project" value="UniProtKB"/>
</dbReference>
<dbReference type="CDD" id="cd22118">
    <property type="entry name" value="F-box_FBXL5"/>
    <property type="match status" value="1"/>
</dbReference>
<dbReference type="CDD" id="cd12109">
    <property type="entry name" value="Hr_FBXL5"/>
    <property type="match status" value="1"/>
</dbReference>
<dbReference type="FunFam" id="3.80.10.10:FF:000715">
    <property type="entry name" value="F-box and leucine-rich repeat protein 5"/>
    <property type="match status" value="1"/>
</dbReference>
<dbReference type="FunFam" id="1.20.1280.50:FF:000007">
    <property type="entry name" value="F-box/LRR-repeat protein 5 isoform X1"/>
    <property type="match status" value="1"/>
</dbReference>
<dbReference type="FunFam" id="3.80.10.10:FF:000086">
    <property type="entry name" value="F-box/LRR-repeat protein 5 isoform X1"/>
    <property type="match status" value="1"/>
</dbReference>
<dbReference type="FunFam" id="1.20.120.520:FF:000002">
    <property type="entry name" value="F-box/LRR-repeat protein 5 isoform X2"/>
    <property type="match status" value="1"/>
</dbReference>
<dbReference type="Gene3D" id="1.20.1280.50">
    <property type="match status" value="1"/>
</dbReference>
<dbReference type="Gene3D" id="1.20.120.520">
    <property type="entry name" value="nmb1532 protein domain like"/>
    <property type="match status" value="1"/>
</dbReference>
<dbReference type="Gene3D" id="3.80.10.10">
    <property type="entry name" value="Ribonuclease Inhibitor"/>
    <property type="match status" value="2"/>
</dbReference>
<dbReference type="InterPro" id="IPR036047">
    <property type="entry name" value="F-box-like_dom_sf"/>
</dbReference>
<dbReference type="InterPro" id="IPR001810">
    <property type="entry name" value="F-box_dom"/>
</dbReference>
<dbReference type="InterPro" id="IPR012312">
    <property type="entry name" value="Hemerythrin-like"/>
</dbReference>
<dbReference type="InterPro" id="IPR045808">
    <property type="entry name" value="Hr_FBXL5"/>
</dbReference>
<dbReference type="InterPro" id="IPR001611">
    <property type="entry name" value="Leu-rich_rpt"/>
</dbReference>
<dbReference type="InterPro" id="IPR006553">
    <property type="entry name" value="Leu-rich_rpt_Cys-con_subtyp"/>
</dbReference>
<dbReference type="InterPro" id="IPR032675">
    <property type="entry name" value="LRR_dom_sf"/>
</dbReference>
<dbReference type="PANTHER" id="PTHR13318:SF19">
    <property type="entry name" value="F-BOX_LRR-REPEAT PROTEIN 5"/>
    <property type="match status" value="1"/>
</dbReference>
<dbReference type="PANTHER" id="PTHR13318">
    <property type="entry name" value="PARTNER OF PAIRED, ISOFORM B-RELATED"/>
    <property type="match status" value="1"/>
</dbReference>
<dbReference type="Pfam" id="PF12937">
    <property type="entry name" value="F-box-like"/>
    <property type="match status" value="1"/>
</dbReference>
<dbReference type="Pfam" id="PF01814">
    <property type="entry name" value="Hemerythrin"/>
    <property type="match status" value="1"/>
</dbReference>
<dbReference type="Pfam" id="PF13516">
    <property type="entry name" value="LRR_6"/>
    <property type="match status" value="2"/>
</dbReference>
<dbReference type="SMART" id="SM00256">
    <property type="entry name" value="FBOX"/>
    <property type="match status" value="1"/>
</dbReference>
<dbReference type="SMART" id="SM00367">
    <property type="entry name" value="LRR_CC"/>
    <property type="match status" value="4"/>
</dbReference>
<dbReference type="SUPFAM" id="SSF81383">
    <property type="entry name" value="F-box domain"/>
    <property type="match status" value="1"/>
</dbReference>
<dbReference type="SUPFAM" id="SSF52047">
    <property type="entry name" value="RNI-like"/>
    <property type="match status" value="1"/>
</dbReference>
<dbReference type="PROSITE" id="PS50181">
    <property type="entry name" value="FBOX"/>
    <property type="match status" value="1"/>
</dbReference>
<accession>C0HAC0</accession>
<gene>
    <name type="primary">fbxl5</name>
</gene>
<feature type="chain" id="PRO_0000390467" description="F-box/LRR-repeat protein 5">
    <location>
        <begin position="1"/>
        <end position="696"/>
    </location>
</feature>
<feature type="domain" description="F-box" evidence="2">
    <location>
        <begin position="205"/>
        <end position="251"/>
    </location>
</feature>
<feature type="repeat" description="LRR 1">
    <location>
        <begin position="343"/>
        <end position="367"/>
    </location>
</feature>
<feature type="repeat" description="LRR 2">
    <location>
        <begin position="368"/>
        <end position="395"/>
    </location>
</feature>
<feature type="repeat" description="LRR 3">
    <location>
        <begin position="396"/>
        <end position="421"/>
    </location>
</feature>
<feature type="repeat" description="LRR 4">
    <location>
        <begin position="582"/>
        <end position="612"/>
    </location>
</feature>
<feature type="repeat" description="LRR 5">
    <location>
        <begin position="613"/>
        <end position="640"/>
    </location>
</feature>
<feature type="repeat" description="LRR 6">
    <location>
        <begin position="641"/>
        <end position="666"/>
    </location>
</feature>
<feature type="region of interest" description="Hemerythrin-like" evidence="1">
    <location>
        <begin position="1"/>
        <end position="159"/>
    </location>
</feature>
<feature type="binding site" evidence="1">
    <location>
        <position position="15"/>
    </location>
    <ligand>
        <name>Fe(3+)</name>
        <dbReference type="ChEBI" id="CHEBI:29034"/>
        <label>1</label>
    </ligand>
</feature>
<feature type="binding site" evidence="1">
    <location>
        <position position="57"/>
    </location>
    <ligand>
        <name>Fe(3+)</name>
        <dbReference type="ChEBI" id="CHEBI:29034"/>
        <label>1</label>
    </ligand>
</feature>
<feature type="binding site" evidence="1">
    <location>
        <position position="58"/>
    </location>
    <ligand>
        <name>Fe(3+)</name>
        <dbReference type="ChEBI" id="CHEBI:29034"/>
        <label>2</label>
    </ligand>
</feature>
<feature type="binding site" evidence="1">
    <location>
        <position position="61"/>
    </location>
    <ligand>
        <name>Fe(3+)</name>
        <dbReference type="ChEBI" id="CHEBI:29034"/>
        <label>1</label>
    </ligand>
</feature>
<feature type="binding site" evidence="1">
    <location>
        <position position="61"/>
    </location>
    <ligand>
        <name>Fe(3+)</name>
        <dbReference type="ChEBI" id="CHEBI:29034"/>
        <label>2</label>
    </ligand>
</feature>
<feature type="binding site" evidence="1">
    <location>
        <position position="80"/>
    </location>
    <ligand>
        <name>Fe(3+)</name>
        <dbReference type="ChEBI" id="CHEBI:29034"/>
        <label>2</label>
    </ligand>
</feature>
<feature type="binding site" evidence="1">
    <location>
        <position position="126"/>
    </location>
    <ligand>
        <name>Fe(3+)</name>
        <dbReference type="ChEBI" id="CHEBI:29034"/>
        <label>2</label>
    </ligand>
</feature>
<feature type="binding site" evidence="1">
    <location>
        <position position="130"/>
    </location>
    <ligand>
        <name>Fe(3+)</name>
        <dbReference type="ChEBI" id="CHEBI:29034"/>
        <label>1</label>
    </ligand>
</feature>
<feature type="binding site" evidence="1">
    <location>
        <position position="130"/>
    </location>
    <ligand>
        <name>Fe(3+)</name>
        <dbReference type="ChEBI" id="CHEBI:29034"/>
        <label>2</label>
    </ligand>
</feature>
<feature type="binding site" evidence="1">
    <location>
        <position position="667"/>
    </location>
    <ligand>
        <name>[2Fe-2S] cluster</name>
        <dbReference type="ChEBI" id="CHEBI:190135"/>
    </ligand>
</feature>
<feature type="binding site" evidence="1">
    <location>
        <position position="681"/>
    </location>
    <ligand>
        <name>[2Fe-2S] cluster</name>
        <dbReference type="ChEBI" id="CHEBI:190135"/>
    </ligand>
</feature>
<feature type="binding site" evidence="1">
    <location>
        <position position="691"/>
    </location>
    <ligand>
        <name>[2Fe-2S] cluster</name>
        <dbReference type="ChEBI" id="CHEBI:190135"/>
    </ligand>
</feature>
<feature type="binding site" evidence="1">
    <location>
        <position position="692"/>
    </location>
    <ligand>
        <name>[2Fe-2S] cluster</name>
        <dbReference type="ChEBI" id="CHEBI:190135"/>
    </ligand>
</feature>
<organism>
    <name type="scientific">Salmo salar</name>
    <name type="common">Atlantic salmon</name>
    <dbReference type="NCBI Taxonomy" id="8030"/>
    <lineage>
        <taxon>Eukaryota</taxon>
        <taxon>Metazoa</taxon>
        <taxon>Chordata</taxon>
        <taxon>Craniata</taxon>
        <taxon>Vertebrata</taxon>
        <taxon>Euteleostomi</taxon>
        <taxon>Actinopterygii</taxon>
        <taxon>Neopterygii</taxon>
        <taxon>Teleostei</taxon>
        <taxon>Protacanthopterygii</taxon>
        <taxon>Salmoniformes</taxon>
        <taxon>Salmonidae</taxon>
        <taxon>Salmoninae</taxon>
        <taxon>Salmo</taxon>
    </lineage>
</organism>
<evidence type="ECO:0000250" key="1">
    <source>
        <dbReference type="UniProtKB" id="Q9UKA1"/>
    </source>
</evidence>
<evidence type="ECO:0000255" key="2">
    <source>
        <dbReference type="PROSITE-ProRule" id="PRU00080"/>
    </source>
</evidence>
<proteinExistence type="evidence at transcript level"/>
<sequence length="696" mass="78309">MAPFPDEVDVFTGPHWRMKQLVGLYCEKLSQTNFSNNNDFRSFLQSLCATFKEFKMHEQIENEYIIGLLQQRSCNVYNVHSDNKLSEMLSLFEKGLRSVKSENEQLNYAQQLKERLEAFTQDFLPHMKEEEEVFQPMLMQYFTYEELKDIKKQVIAQHSSQQRWDCAAEVLKGLSLWSQAEELHKAFKYADHEKTDDELEKELCSTHISQLPTEILLCLFRYLGPEDLCHCGQVCSAWSDLAKTGSLWRHLYPVRWARGDYYRGPPDDVNQEPDEEWVKSLQDEGKAYQEWDEDADVDESDASCEDSLAISAAQREKKLLNGMIQNLLPAVGSSVRSIVLAYSSTVSSKMVRQILSLCPNLTHLDLTQTDVTDSAFDSWSSLWACLSLEHLDLSGCEKLTDRTLKKLSLGLGDLASPTCSEKRSDRRAKLLKSPPSPISLLDKRSLRPTGHSRQVLIFKQWPGKLGSAPCSPTRVWVLDASELADIEDAAEWNRRRGVSTPEVRGFVETQPGGLSCCCRRRRGGFRTGFSTSYWQQQYGLGEAGCGHSTCCTGETALRTLGGLQYESYTTRGSAGAEFRTKCSSGGQLCLECDNRTDPSDGRRSLRFLSLSGCYQVTDLGLRALSQRGGLPLLEHLNLSGCLLITEVGLQELVSACPALNDEHFYYCDNINGPHADTASGCQNLQCGFRVCCRSGE</sequence>